<evidence type="ECO:0000303" key="1">
    <source>
    </source>
</evidence>
<evidence type="ECO:0000303" key="2">
    <source>
    </source>
</evidence>
<evidence type="ECO:0000305" key="3"/>
<reference key="1">
    <citation type="journal article" date="1999" name="Nature">
        <title>Sequence and analysis of chromosome 2 of the plant Arabidopsis thaliana.</title>
        <authorList>
            <person name="Lin X."/>
            <person name="Kaul S."/>
            <person name="Rounsley S.D."/>
            <person name="Shea T.P."/>
            <person name="Benito M.-I."/>
            <person name="Town C.D."/>
            <person name="Fujii C.Y."/>
            <person name="Mason T.M."/>
            <person name="Bowman C.L."/>
            <person name="Barnstead M.E."/>
            <person name="Feldblyum T.V."/>
            <person name="Buell C.R."/>
            <person name="Ketchum K.A."/>
            <person name="Lee J.J."/>
            <person name="Ronning C.M."/>
            <person name="Koo H.L."/>
            <person name="Moffat K.S."/>
            <person name="Cronin L.A."/>
            <person name="Shen M."/>
            <person name="Pai G."/>
            <person name="Van Aken S."/>
            <person name="Umayam L."/>
            <person name="Tallon L.J."/>
            <person name="Gill J.E."/>
            <person name="Adams M.D."/>
            <person name="Carrera A.J."/>
            <person name="Creasy T.H."/>
            <person name="Goodman H.M."/>
            <person name="Somerville C.R."/>
            <person name="Copenhaver G.P."/>
            <person name="Preuss D."/>
            <person name="Nierman W.C."/>
            <person name="White O."/>
            <person name="Eisen J.A."/>
            <person name="Salzberg S.L."/>
            <person name="Fraser C.M."/>
            <person name="Venter J.C."/>
        </authorList>
    </citation>
    <scope>NUCLEOTIDE SEQUENCE [LARGE SCALE GENOMIC DNA]</scope>
    <source>
        <strain>cv. Columbia</strain>
    </source>
</reference>
<reference key="2">
    <citation type="journal article" date="2017" name="Plant J.">
        <title>Araport11: a complete reannotation of the Arabidopsis thaliana reference genome.</title>
        <authorList>
            <person name="Cheng C.Y."/>
            <person name="Krishnakumar V."/>
            <person name="Chan A.P."/>
            <person name="Thibaud-Nissen F."/>
            <person name="Schobel S."/>
            <person name="Town C.D."/>
        </authorList>
    </citation>
    <scope>GENOME REANNOTATION</scope>
    <source>
        <strain>cv. Columbia</strain>
    </source>
</reference>
<reference key="3">
    <citation type="submission" date="2004-07" db="EMBL/GenBank/DDBJ databases">
        <title>Arabidopsis ORF clones.</title>
        <authorList>
            <person name="Shinn P."/>
            <person name="Chen H."/>
            <person name="Cheuk R.F."/>
            <person name="Kim C.J."/>
            <person name="Ecker J.R."/>
        </authorList>
    </citation>
    <scope>NUCLEOTIDE SEQUENCE [LARGE SCALE MRNA]</scope>
    <source>
        <strain>cv. Columbia</strain>
    </source>
</reference>
<reference key="4">
    <citation type="journal article" date="2001" name="Plant Physiol.">
        <title>The organization of cytoplasmic ribosomal protein genes in the Arabidopsis genome.</title>
        <authorList>
            <person name="Barakat A."/>
            <person name="Szick-Miranda K."/>
            <person name="Chang I.-F."/>
            <person name="Guyot R."/>
            <person name="Blanc G."/>
            <person name="Cooke R."/>
            <person name="Delseny M."/>
            <person name="Bailey-Serres J."/>
        </authorList>
    </citation>
    <scope>GENE FAMILY ORGANIZATION</scope>
    <scope>NOMENCLATURE</scope>
</reference>
<reference key="5">
    <citation type="journal article" date="2023" name="Plant Cell">
        <title>An updated nomenclature for plant ribosomal protein genes.</title>
        <authorList>
            <person name="Scarpin M.R."/>
            <person name="Busche M."/>
            <person name="Martinez R.E."/>
            <person name="Harper L.C."/>
            <person name="Reiser L."/>
            <person name="Szakonyi D."/>
            <person name="Merchante C."/>
            <person name="Lan T."/>
            <person name="Xiong W."/>
            <person name="Mo B."/>
            <person name="Tang G."/>
            <person name="Chen X."/>
            <person name="Bailey-Serres J."/>
            <person name="Browning K.S."/>
            <person name="Brunkard J.O."/>
        </authorList>
    </citation>
    <scope>NOMENCLATURE</scope>
</reference>
<comment type="subunit">
    <text evidence="2">Component of the mitochondrial ribosome small subunit.</text>
</comment>
<comment type="subcellular location">
    <subcellularLocation>
        <location evidence="2">Mitochondrion</location>
    </subcellularLocation>
</comment>
<comment type="similarity">
    <text evidence="3">Belongs to the universal ribosomal protein uS8 family.</text>
</comment>
<feature type="chain" id="PRO_0000250167" description="Small ribosomal subunit protein uS8mz">
    <location>
        <begin position="1"/>
        <end position="129"/>
    </location>
</feature>
<protein>
    <recommendedName>
        <fullName evidence="2">Small ribosomal subunit protein uS8mz</fullName>
    </recommendedName>
    <alternativeName>
        <fullName evidence="1">40S ribosomal protein S15a-2</fullName>
    </alternativeName>
</protein>
<organism>
    <name type="scientific">Arabidopsis thaliana</name>
    <name type="common">Mouse-ear cress</name>
    <dbReference type="NCBI Taxonomy" id="3702"/>
    <lineage>
        <taxon>Eukaryota</taxon>
        <taxon>Viridiplantae</taxon>
        <taxon>Streptophyta</taxon>
        <taxon>Embryophyta</taxon>
        <taxon>Tracheophyta</taxon>
        <taxon>Spermatophyta</taxon>
        <taxon>Magnoliopsida</taxon>
        <taxon>eudicotyledons</taxon>
        <taxon>Gunneridae</taxon>
        <taxon>Pentapetalae</taxon>
        <taxon>rosids</taxon>
        <taxon>malvids</taxon>
        <taxon>Brassicales</taxon>
        <taxon>Brassicaceae</taxon>
        <taxon>Camelineae</taxon>
        <taxon>Arabidopsis</taxon>
    </lineage>
</organism>
<accession>O82205</accession>
<gene>
    <name type="primary">RPS15AB</name>
    <name type="ordered locus">At2g19720</name>
    <name type="ORF">F6F22.25</name>
</gene>
<dbReference type="EMBL" id="AC005169">
    <property type="protein sequence ID" value="AAC62143.1"/>
    <property type="molecule type" value="Genomic_DNA"/>
</dbReference>
<dbReference type="EMBL" id="CP002685">
    <property type="protein sequence ID" value="AEC06917.1"/>
    <property type="molecule type" value="Genomic_DNA"/>
</dbReference>
<dbReference type="EMBL" id="BT014766">
    <property type="protein sequence ID" value="AAT41749.1"/>
    <property type="molecule type" value="mRNA"/>
</dbReference>
<dbReference type="EMBL" id="BT014999">
    <property type="protein sequence ID" value="AAT70450.1"/>
    <property type="molecule type" value="mRNA"/>
</dbReference>
<dbReference type="PIR" id="C84580">
    <property type="entry name" value="C84580"/>
</dbReference>
<dbReference type="RefSeq" id="NP_179562.1">
    <property type="nucleotide sequence ID" value="NM_127530.5"/>
</dbReference>
<dbReference type="SMR" id="O82205"/>
<dbReference type="FunCoup" id="O82205">
    <property type="interactions" value="243"/>
</dbReference>
<dbReference type="STRING" id="3702.O82205"/>
<dbReference type="PaxDb" id="3702-AT2G19720.1"/>
<dbReference type="ProteomicsDB" id="224874"/>
<dbReference type="EnsemblPlants" id="AT2G19720.1">
    <property type="protein sequence ID" value="AT2G19720.1"/>
    <property type="gene ID" value="AT2G19720"/>
</dbReference>
<dbReference type="GeneID" id="816491"/>
<dbReference type="Gramene" id="AT2G19720.1">
    <property type="protein sequence ID" value="AT2G19720.1"/>
    <property type="gene ID" value="AT2G19720"/>
</dbReference>
<dbReference type="KEGG" id="ath:AT2G19720"/>
<dbReference type="Araport" id="AT2G19720"/>
<dbReference type="TAIR" id="AT2G19720">
    <property type="gene designation" value="RPS15AB"/>
</dbReference>
<dbReference type="eggNOG" id="KOG1754">
    <property type="taxonomic scope" value="Eukaryota"/>
</dbReference>
<dbReference type="HOGENOM" id="CLU_098428_1_1_1"/>
<dbReference type="InParanoid" id="O82205"/>
<dbReference type="OMA" id="DQYTERT"/>
<dbReference type="OrthoDB" id="10250260at2759"/>
<dbReference type="PhylomeDB" id="O82205"/>
<dbReference type="PRO" id="PR:O82205"/>
<dbReference type="Proteomes" id="UP000006548">
    <property type="component" value="Chromosome 2"/>
</dbReference>
<dbReference type="ExpressionAtlas" id="O82205">
    <property type="expression patterns" value="baseline and differential"/>
</dbReference>
<dbReference type="GO" id="GO:0022627">
    <property type="term" value="C:cytosolic small ribosomal subunit"/>
    <property type="evidence" value="ECO:0007005"/>
    <property type="project" value="TAIR"/>
</dbReference>
<dbReference type="GO" id="GO:0005739">
    <property type="term" value="C:mitochondrion"/>
    <property type="evidence" value="ECO:0007669"/>
    <property type="project" value="UniProtKB-SubCell"/>
</dbReference>
<dbReference type="GO" id="GO:0003735">
    <property type="term" value="F:structural constituent of ribosome"/>
    <property type="evidence" value="ECO:0000314"/>
    <property type="project" value="CAFA"/>
</dbReference>
<dbReference type="GO" id="GO:0006412">
    <property type="term" value="P:translation"/>
    <property type="evidence" value="ECO:0007669"/>
    <property type="project" value="InterPro"/>
</dbReference>
<dbReference type="FunFam" id="3.30.1370.30:FF:000001">
    <property type="entry name" value="40S ribosomal protein S15a"/>
    <property type="match status" value="1"/>
</dbReference>
<dbReference type="FunFam" id="3.30.1490.10:FF:000003">
    <property type="entry name" value="40S ribosomal protein S15a-5"/>
    <property type="match status" value="1"/>
</dbReference>
<dbReference type="Gene3D" id="3.30.1370.30">
    <property type="match status" value="1"/>
</dbReference>
<dbReference type="Gene3D" id="3.30.1490.10">
    <property type="match status" value="1"/>
</dbReference>
<dbReference type="InterPro" id="IPR000630">
    <property type="entry name" value="Ribosomal_uS8"/>
</dbReference>
<dbReference type="InterPro" id="IPR047863">
    <property type="entry name" value="Ribosomal_uS8_CS"/>
</dbReference>
<dbReference type="InterPro" id="IPR035987">
    <property type="entry name" value="Ribosomal_uS8_sf"/>
</dbReference>
<dbReference type="NCBIfam" id="NF003115">
    <property type="entry name" value="PRK04034.1"/>
    <property type="match status" value="1"/>
</dbReference>
<dbReference type="PANTHER" id="PTHR11758">
    <property type="entry name" value="40S RIBOSOMAL PROTEIN S15A"/>
    <property type="match status" value="1"/>
</dbReference>
<dbReference type="Pfam" id="PF00410">
    <property type="entry name" value="Ribosomal_S8"/>
    <property type="match status" value="1"/>
</dbReference>
<dbReference type="SUPFAM" id="SSF56047">
    <property type="entry name" value="Ribosomal protein S8"/>
    <property type="match status" value="1"/>
</dbReference>
<dbReference type="PROSITE" id="PS00053">
    <property type="entry name" value="RIBOSOMAL_S8"/>
    <property type="match status" value="1"/>
</dbReference>
<proteinExistence type="evidence at transcript level"/>
<keyword id="KW-0496">Mitochondrion</keyword>
<keyword id="KW-1185">Reference proteome</keyword>
<keyword id="KW-0687">Ribonucleoprotein</keyword>
<keyword id="KW-0689">Ribosomal protein</keyword>
<name>R15A2_ARATH</name>
<sequence length="129" mass="14694">MGRRILNDALRTIVNAEKRGKASVELKPVSTVMSSFLKIMKEKGYIKNFQVHDPHRVGRITVDLQGRVNDCKALTYRQDVKANEIGQYTERTLPTRQWGYIVITTPDGILDHEEAIKRNVGGQVLGFFH</sequence>